<sequence>MSGIDINHKYDRKVRRTEPKSQDVYLRLLVKLYRFLQRRTNKKFNRIILKRLFMSKINRPPLSLQRIARFFKAANQPESTVVVVGTVTDDARLLVVPKLTLCALHVTQTARERILKAGGEVLTFDQLALKSPTGKNTLLLQGKRTARTACKHFGKAPGVPHSHTRPYVRSKGRKFERARGRRSSCGYKK</sequence>
<reference key="1">
    <citation type="journal article" date="2005" name="Genome Res.">
        <title>Comparative genome sequencing of Drosophila pseudoobscura: chromosomal, gene, and cis-element evolution.</title>
        <authorList>
            <person name="Richards S."/>
            <person name="Liu Y."/>
            <person name="Bettencourt B.R."/>
            <person name="Hradecky P."/>
            <person name="Letovsky S."/>
            <person name="Nielsen R."/>
            <person name="Thornton K."/>
            <person name="Hubisz M.J."/>
            <person name="Chen R."/>
            <person name="Meisel R.P."/>
            <person name="Couronne O."/>
            <person name="Hua S."/>
            <person name="Smith M.A."/>
            <person name="Zhang P."/>
            <person name="Liu J."/>
            <person name="Bussemaker H.J."/>
            <person name="van Batenburg M.F."/>
            <person name="Howells S.L."/>
            <person name="Scherer S.E."/>
            <person name="Sodergren E."/>
            <person name="Matthews B.B."/>
            <person name="Crosby M.A."/>
            <person name="Schroeder A.J."/>
            <person name="Ortiz-Barrientos D."/>
            <person name="Rives C.M."/>
            <person name="Metzker M.L."/>
            <person name="Muzny D.M."/>
            <person name="Scott G."/>
            <person name="Steffen D."/>
            <person name="Wheeler D.A."/>
            <person name="Worley K.C."/>
            <person name="Havlak P."/>
            <person name="Durbin K.J."/>
            <person name="Egan A."/>
            <person name="Gill R."/>
            <person name="Hume J."/>
            <person name="Morgan M.B."/>
            <person name="Miner G."/>
            <person name="Hamilton C."/>
            <person name="Huang Y."/>
            <person name="Waldron L."/>
            <person name="Verduzco D."/>
            <person name="Clerc-Blankenburg K.P."/>
            <person name="Dubchak I."/>
            <person name="Noor M.A.F."/>
            <person name="Anderson W."/>
            <person name="White K.P."/>
            <person name="Clark A.G."/>
            <person name="Schaeffer S.W."/>
            <person name="Gelbart W.M."/>
            <person name="Weinstock G.M."/>
            <person name="Gibbs R.A."/>
        </authorList>
    </citation>
    <scope>NUCLEOTIDE SEQUENCE [LARGE SCALE GENOMIC DNA]</scope>
    <source>
        <strain>MV2-25 / Tucson 14011-0121.94</strain>
    </source>
</reference>
<evidence type="ECO:0000250" key="1"/>
<evidence type="ECO:0000305" key="2"/>
<accession>Q2M0G4</accession>
<proteinExistence type="inferred from homology"/>
<keyword id="KW-0963">Cytoplasm</keyword>
<keyword id="KW-1185">Reference proteome</keyword>
<keyword id="KW-0687">Ribonucleoprotein</keyword>
<keyword id="KW-0689">Ribosomal protein</keyword>
<name>RL18_DROPS</name>
<organism>
    <name type="scientific">Drosophila pseudoobscura pseudoobscura</name>
    <name type="common">Fruit fly</name>
    <dbReference type="NCBI Taxonomy" id="46245"/>
    <lineage>
        <taxon>Eukaryota</taxon>
        <taxon>Metazoa</taxon>
        <taxon>Ecdysozoa</taxon>
        <taxon>Arthropoda</taxon>
        <taxon>Hexapoda</taxon>
        <taxon>Insecta</taxon>
        <taxon>Pterygota</taxon>
        <taxon>Neoptera</taxon>
        <taxon>Endopterygota</taxon>
        <taxon>Diptera</taxon>
        <taxon>Brachycera</taxon>
        <taxon>Muscomorpha</taxon>
        <taxon>Ephydroidea</taxon>
        <taxon>Drosophilidae</taxon>
        <taxon>Drosophila</taxon>
        <taxon>Sophophora</taxon>
    </lineage>
</organism>
<comment type="subcellular location">
    <subcellularLocation>
        <location evidence="1">Cytoplasm</location>
    </subcellularLocation>
</comment>
<comment type="similarity">
    <text evidence="2">Belongs to the eukaryotic ribosomal protein eL18 family.</text>
</comment>
<protein>
    <recommendedName>
        <fullName evidence="2">Large ribosomal subunit protein eL18</fullName>
    </recommendedName>
    <alternativeName>
        <fullName>60S ribosomal protein L18</fullName>
    </alternativeName>
</protein>
<dbReference type="EMBL" id="CH379069">
    <property type="protein sequence ID" value="EAL30968.2"/>
    <property type="molecule type" value="Genomic_DNA"/>
</dbReference>
<dbReference type="SMR" id="Q2M0G4"/>
<dbReference type="FunCoup" id="Q2M0G4">
    <property type="interactions" value="1447"/>
</dbReference>
<dbReference type="STRING" id="46245.Q2M0G4"/>
<dbReference type="eggNOG" id="KOG1714">
    <property type="taxonomic scope" value="Eukaryota"/>
</dbReference>
<dbReference type="HOGENOM" id="CLU_080024_0_0_1"/>
<dbReference type="InParanoid" id="Q2M0G4"/>
<dbReference type="OMA" id="IDICHKN"/>
<dbReference type="ChiTaRS" id="RpL18">
    <property type="organism name" value="fly"/>
</dbReference>
<dbReference type="Proteomes" id="UP000001819">
    <property type="component" value="Unplaced"/>
</dbReference>
<dbReference type="GO" id="GO:0022625">
    <property type="term" value="C:cytosolic large ribosomal subunit"/>
    <property type="evidence" value="ECO:0007669"/>
    <property type="project" value="TreeGrafter"/>
</dbReference>
<dbReference type="GO" id="GO:0003723">
    <property type="term" value="F:RNA binding"/>
    <property type="evidence" value="ECO:0007669"/>
    <property type="project" value="TreeGrafter"/>
</dbReference>
<dbReference type="GO" id="GO:0003735">
    <property type="term" value="F:structural constituent of ribosome"/>
    <property type="evidence" value="ECO:0007669"/>
    <property type="project" value="InterPro"/>
</dbReference>
<dbReference type="GO" id="GO:0006412">
    <property type="term" value="P:translation"/>
    <property type="evidence" value="ECO:0007669"/>
    <property type="project" value="InterPro"/>
</dbReference>
<dbReference type="FunFam" id="3.100.10.10:FF:000001">
    <property type="entry name" value="60S ribosomal protein L18"/>
    <property type="match status" value="1"/>
</dbReference>
<dbReference type="Gene3D" id="3.100.10.10">
    <property type="match status" value="1"/>
</dbReference>
<dbReference type="InterPro" id="IPR000039">
    <property type="entry name" value="Ribosomal_eL18"/>
</dbReference>
<dbReference type="InterPro" id="IPR021132">
    <property type="entry name" value="Ribosomal_eL18/eL18-A/B/_CS"/>
</dbReference>
<dbReference type="InterPro" id="IPR021131">
    <property type="entry name" value="Ribosomal_uL15/eL18"/>
</dbReference>
<dbReference type="InterPro" id="IPR036227">
    <property type="entry name" value="Ribosomal_uL15/eL18_sf"/>
</dbReference>
<dbReference type="PANTHER" id="PTHR10934">
    <property type="entry name" value="60S RIBOSOMAL PROTEIN L18"/>
    <property type="match status" value="1"/>
</dbReference>
<dbReference type="PANTHER" id="PTHR10934:SF2">
    <property type="entry name" value="LARGE RIBOSOMAL SUBUNIT PROTEIN EL18"/>
    <property type="match status" value="1"/>
</dbReference>
<dbReference type="Pfam" id="PF17135">
    <property type="entry name" value="Ribosomal_L18"/>
    <property type="match status" value="1"/>
</dbReference>
<dbReference type="SUPFAM" id="SSF52080">
    <property type="entry name" value="Ribosomal proteins L15p and L18e"/>
    <property type="match status" value="1"/>
</dbReference>
<dbReference type="PROSITE" id="PS01106">
    <property type="entry name" value="RIBOSOMAL_L18E"/>
    <property type="match status" value="1"/>
</dbReference>
<feature type="chain" id="PRO_0000291629" description="Large ribosomal subunit protein eL18">
    <location>
        <begin position="1"/>
        <end position="189"/>
    </location>
</feature>
<gene>
    <name type="primary">RpL18</name>
    <name type="ORF">GA21210</name>
</gene>